<proteinExistence type="evidence at protein level"/>
<evidence type="ECO:0000256" key="1">
    <source>
        <dbReference type="SAM" id="MobiDB-lite"/>
    </source>
</evidence>
<evidence type="ECO:0000269" key="2">
    <source>
    </source>
</evidence>
<evidence type="ECO:0000269" key="3">
    <source>
    </source>
</evidence>
<evidence type="ECO:0000305" key="4"/>
<organism>
    <name type="scientific">Synechococcus elongatus</name>
    <dbReference type="NCBI Taxonomy" id="32046"/>
    <lineage>
        <taxon>Bacteria</taxon>
        <taxon>Bacillati</taxon>
        <taxon>Cyanobacteriota</taxon>
        <taxon>Cyanophyceae</taxon>
        <taxon>Synechococcales</taxon>
        <taxon>Synechococcaceae</taxon>
        <taxon>Synechococcus</taxon>
    </lineage>
</organism>
<sequence length="139" mass="15371">MTTLTGQPPLYGGSTGGLLSAADTEEKYAITWTSPKEQVFEMPTAGAAVMREGENLVYFARKEQCLALAAQQLRPRKINDYKIYRIFPDGETVLIHPKDGVFPEKVNKGREAVNSVPRSIGQNPNPSQLKFTGKKPYDP</sequence>
<reference key="1">
    <citation type="journal article" date="1993" name="Gene">
        <title>Genes encoding eleven subunits of photosystem I from the thermophilic cyanobacterium Synechococcus sp.</title>
        <authorList>
            <person name="Muehlenhoff U."/>
            <person name="Haehnel W."/>
            <person name="Witt H.T."/>
            <person name="Herrmann R.G."/>
        </authorList>
    </citation>
    <scope>NUCLEOTIDE SEQUENCE [GENOMIC DNA]</scope>
</reference>
<reference key="2">
    <citation type="journal article" date="1991" name="Protein Seq. Data Anal.">
        <title>Amino acid sequence of the 14-kDa protein in the photosystem I reaction center complex from Synechococcus elongatus naegeli.</title>
        <authorList>
            <person name="Kotani N."/>
            <person name="Enami I."/>
            <person name="Aso K."/>
            <person name="Tsugita A."/>
        </authorList>
    </citation>
    <scope>PROTEIN SEQUENCE OF 2-138</scope>
</reference>
<reference key="3">
    <citation type="journal article" date="1990" name="Protein Seq. Data Anal.">
        <title>N-terminal amino acid sequence analysis of small subunits of photosystem I reaction center complex from a thermophilic cyanobacterium, Synechococcus elongatus nageli.</title>
        <authorList>
            <person name="Enami I."/>
            <person name="Kaiho H."/>
            <person name="Izumi H."/>
            <person name="Katoh S."/>
            <person name="Kotani N."/>
            <person name="Jone C.S."/>
            <person name="Kamo M."/>
            <person name="Tsugita A."/>
        </authorList>
    </citation>
    <scope>PROTEIN SEQUENCE OF 2-62</scope>
</reference>
<dbReference type="EMBL" id="X63769">
    <property type="protein sequence ID" value="CAA45306.1"/>
    <property type="molecule type" value="Genomic_DNA"/>
</dbReference>
<dbReference type="PIR" id="A35567">
    <property type="entry name" value="A35567"/>
</dbReference>
<dbReference type="PIR" id="S17529">
    <property type="entry name" value="S17529"/>
</dbReference>
<dbReference type="SMR" id="P0A421"/>
<dbReference type="GO" id="GO:0009538">
    <property type="term" value="C:photosystem I reaction center"/>
    <property type="evidence" value="ECO:0007669"/>
    <property type="project" value="InterPro"/>
</dbReference>
<dbReference type="GO" id="GO:0015979">
    <property type="term" value="P:photosynthesis"/>
    <property type="evidence" value="ECO:0007669"/>
    <property type="project" value="UniProtKB-KW"/>
</dbReference>
<dbReference type="Gene3D" id="3.30.1470.10">
    <property type="entry name" value="Photosystem I PsaD, reaction center subunit II"/>
    <property type="match status" value="1"/>
</dbReference>
<dbReference type="InterPro" id="IPR003685">
    <property type="entry name" value="PsaD"/>
</dbReference>
<dbReference type="InterPro" id="IPR036579">
    <property type="entry name" value="PsaD_sf"/>
</dbReference>
<dbReference type="PANTHER" id="PTHR31982:SF5">
    <property type="entry name" value="PHOTOSYSTEM I REACTION CENTER SUBUNIT II, CHLOROPLASTIC"/>
    <property type="match status" value="1"/>
</dbReference>
<dbReference type="PANTHER" id="PTHR31982">
    <property type="entry name" value="PHOTOSYSTEM I REACTION CENTER SUBUNIT II-1, CHLOROPLASTIC-RELATED"/>
    <property type="match status" value="1"/>
</dbReference>
<dbReference type="Pfam" id="PF02531">
    <property type="entry name" value="PsaD"/>
    <property type="match status" value="1"/>
</dbReference>
<dbReference type="SUPFAM" id="SSF64234">
    <property type="entry name" value="Photosystem I subunit PsaD"/>
    <property type="match status" value="1"/>
</dbReference>
<keyword id="KW-0903">Direct protein sequencing</keyword>
<keyword id="KW-0602">Photosynthesis</keyword>
<keyword id="KW-0603">Photosystem I</keyword>
<accession>P0A421</accession>
<accession>P20452</accession>
<accession>P20899</accession>
<protein>
    <recommendedName>
        <fullName>Photosystem I reaction center subunit II</fullName>
    </recommendedName>
    <alternativeName>
        <fullName>Photosystem I 16 kDa polypeptide</fullName>
        <shortName>PSI-D</shortName>
    </alternativeName>
</protein>
<feature type="initiator methionine" description="Removed" evidence="2 3">
    <location>
        <position position="1"/>
    </location>
</feature>
<feature type="chain" id="PRO_0000206055" description="Photosystem I reaction center subunit II">
    <location>
        <begin position="2"/>
        <end position="139"/>
    </location>
</feature>
<feature type="region of interest" description="Disordered" evidence="1">
    <location>
        <begin position="113"/>
        <end position="139"/>
    </location>
</feature>
<feature type="compositionally biased region" description="Polar residues" evidence="1">
    <location>
        <begin position="116"/>
        <end position="130"/>
    </location>
</feature>
<feature type="sequence conflict" description="In Ref. 2; AA sequence." evidence="4" ref="2">
    <original>T</original>
    <variation>P</variation>
    <location>
        <position position="132"/>
    </location>
</feature>
<name>PSAD_SYNEL</name>
<comment type="function">
    <text>PsaD can form complexes with ferredoxin and ferredoxin-oxidoreductase in photosystem I (PS I) reaction center.</text>
</comment>
<comment type="similarity">
    <text evidence="4">Belongs to the PsaD family.</text>
</comment>
<gene>
    <name type="primary">psaD</name>
</gene>